<keyword id="KW-0963">Cytoplasm</keyword>
<keyword id="KW-0664">Pyridoxine biosynthesis</keyword>
<keyword id="KW-0808">Transferase</keyword>
<name>PDXJ_NEIMA</name>
<sequence length="242" mass="26670">MLLGVNIDHIATVRNARGTTYPSPVEAALVAETHGADLITMHLREDRRHIKDADVFAVKNAIRTRLNLEMALTEEMLENALKVMPEDVCIVPEKRQEITTEGGLDVLAQQDKIAEFTKILTDAGIRVSLFIDADDRQIQAARDVGAPVVELHTGAYADARSHAEQIRQFERIQNGAHFASDLGLVVNAGHGLTIHNVTPIAQILAIRELNIGHSLISQALFLGLPEAVRQMKEAMFRARLLP</sequence>
<evidence type="ECO:0000255" key="1">
    <source>
        <dbReference type="HAMAP-Rule" id="MF_00279"/>
    </source>
</evidence>
<comment type="function">
    <text evidence="1">Catalyzes the complicated ring closure reaction between the two acyclic compounds 1-deoxy-D-xylulose-5-phosphate (DXP) and 3-amino-2-oxopropyl phosphate (1-amino-acetone-3-phosphate or AAP) to form pyridoxine 5'-phosphate (PNP) and inorganic phosphate.</text>
</comment>
<comment type="catalytic activity">
    <reaction evidence="1">
        <text>3-amino-2-oxopropyl phosphate + 1-deoxy-D-xylulose 5-phosphate = pyridoxine 5'-phosphate + phosphate + 2 H2O + H(+)</text>
        <dbReference type="Rhea" id="RHEA:15265"/>
        <dbReference type="ChEBI" id="CHEBI:15377"/>
        <dbReference type="ChEBI" id="CHEBI:15378"/>
        <dbReference type="ChEBI" id="CHEBI:43474"/>
        <dbReference type="ChEBI" id="CHEBI:57279"/>
        <dbReference type="ChEBI" id="CHEBI:57792"/>
        <dbReference type="ChEBI" id="CHEBI:58589"/>
        <dbReference type="EC" id="2.6.99.2"/>
    </reaction>
</comment>
<comment type="pathway">
    <text evidence="1">Cofactor biosynthesis; pyridoxine 5'-phosphate biosynthesis; pyridoxine 5'-phosphate from D-erythrose 4-phosphate: step 5/5.</text>
</comment>
<comment type="subunit">
    <text evidence="1">Homooctamer; tetramer of dimers.</text>
</comment>
<comment type="subcellular location">
    <subcellularLocation>
        <location evidence="1">Cytoplasm</location>
    </subcellularLocation>
</comment>
<comment type="similarity">
    <text evidence="1">Belongs to the PNP synthase family.</text>
</comment>
<protein>
    <recommendedName>
        <fullName evidence="1">Pyridoxine 5'-phosphate synthase</fullName>
        <shortName evidence="1">PNP synthase</shortName>
        <ecNumber evidence="1">2.6.99.2</ecNumber>
    </recommendedName>
</protein>
<dbReference type="EC" id="2.6.99.2" evidence="1"/>
<dbReference type="EMBL" id="AF058689">
    <property type="protein sequence ID" value="AAF06688.1"/>
    <property type="molecule type" value="Genomic_DNA"/>
</dbReference>
<dbReference type="EMBL" id="AL157959">
    <property type="protein sequence ID" value="CAM09141.1"/>
    <property type="molecule type" value="Genomic_DNA"/>
</dbReference>
<dbReference type="PIR" id="H81833">
    <property type="entry name" value="H81833"/>
</dbReference>
<dbReference type="RefSeq" id="WP_002229055.1">
    <property type="nucleotide sequence ID" value="NC_003116.1"/>
</dbReference>
<dbReference type="SMR" id="Q9RQV9"/>
<dbReference type="EnsemblBacteria" id="CAM09141">
    <property type="protein sequence ID" value="CAM09141"/>
    <property type="gene ID" value="NMA2037"/>
</dbReference>
<dbReference type="GeneID" id="93387543"/>
<dbReference type="KEGG" id="nma:NMA2037"/>
<dbReference type="HOGENOM" id="CLU_074563_0_0_4"/>
<dbReference type="UniPathway" id="UPA00244">
    <property type="reaction ID" value="UER00313"/>
</dbReference>
<dbReference type="Proteomes" id="UP000000626">
    <property type="component" value="Chromosome"/>
</dbReference>
<dbReference type="GO" id="GO:0005829">
    <property type="term" value="C:cytosol"/>
    <property type="evidence" value="ECO:0007669"/>
    <property type="project" value="TreeGrafter"/>
</dbReference>
<dbReference type="GO" id="GO:0033856">
    <property type="term" value="F:pyridoxine 5'-phosphate synthase activity"/>
    <property type="evidence" value="ECO:0007669"/>
    <property type="project" value="UniProtKB-EC"/>
</dbReference>
<dbReference type="GO" id="GO:0008615">
    <property type="term" value="P:pyridoxine biosynthetic process"/>
    <property type="evidence" value="ECO:0007669"/>
    <property type="project" value="UniProtKB-UniRule"/>
</dbReference>
<dbReference type="CDD" id="cd00003">
    <property type="entry name" value="PNPsynthase"/>
    <property type="match status" value="1"/>
</dbReference>
<dbReference type="FunFam" id="3.20.20.70:FF:000247">
    <property type="entry name" value="Pyridoxine 5'-phosphate synthase"/>
    <property type="match status" value="1"/>
</dbReference>
<dbReference type="Gene3D" id="3.20.20.70">
    <property type="entry name" value="Aldolase class I"/>
    <property type="match status" value="1"/>
</dbReference>
<dbReference type="HAMAP" id="MF_00279">
    <property type="entry name" value="PdxJ"/>
    <property type="match status" value="1"/>
</dbReference>
<dbReference type="InterPro" id="IPR013785">
    <property type="entry name" value="Aldolase_TIM"/>
</dbReference>
<dbReference type="InterPro" id="IPR004569">
    <property type="entry name" value="PyrdxlP_synth_PdxJ"/>
</dbReference>
<dbReference type="InterPro" id="IPR036130">
    <property type="entry name" value="Pyridoxine-5'_phos_synth"/>
</dbReference>
<dbReference type="NCBIfam" id="TIGR00559">
    <property type="entry name" value="pdxJ"/>
    <property type="match status" value="1"/>
</dbReference>
<dbReference type="NCBIfam" id="NF003623">
    <property type="entry name" value="PRK05265.1-1"/>
    <property type="match status" value="1"/>
</dbReference>
<dbReference type="NCBIfam" id="NF003624">
    <property type="entry name" value="PRK05265.1-2"/>
    <property type="match status" value="1"/>
</dbReference>
<dbReference type="NCBIfam" id="NF003625">
    <property type="entry name" value="PRK05265.1-3"/>
    <property type="match status" value="1"/>
</dbReference>
<dbReference type="NCBIfam" id="NF003627">
    <property type="entry name" value="PRK05265.1-5"/>
    <property type="match status" value="1"/>
</dbReference>
<dbReference type="PANTHER" id="PTHR30456">
    <property type="entry name" value="PYRIDOXINE 5'-PHOSPHATE SYNTHASE"/>
    <property type="match status" value="1"/>
</dbReference>
<dbReference type="PANTHER" id="PTHR30456:SF0">
    <property type="entry name" value="PYRIDOXINE 5'-PHOSPHATE SYNTHASE"/>
    <property type="match status" value="1"/>
</dbReference>
<dbReference type="Pfam" id="PF03740">
    <property type="entry name" value="PdxJ"/>
    <property type="match status" value="1"/>
</dbReference>
<dbReference type="SUPFAM" id="SSF63892">
    <property type="entry name" value="Pyridoxine 5'-phosphate synthase"/>
    <property type="match status" value="1"/>
</dbReference>
<proteinExistence type="inferred from homology"/>
<organism>
    <name type="scientific">Neisseria meningitidis serogroup A / serotype 4A (strain DSM 15465 / Z2491)</name>
    <dbReference type="NCBI Taxonomy" id="122587"/>
    <lineage>
        <taxon>Bacteria</taxon>
        <taxon>Pseudomonadati</taxon>
        <taxon>Pseudomonadota</taxon>
        <taxon>Betaproteobacteria</taxon>
        <taxon>Neisseriales</taxon>
        <taxon>Neisseriaceae</taxon>
        <taxon>Neisseria</taxon>
    </lineage>
</organism>
<gene>
    <name evidence="1" type="primary">pdxJ</name>
    <name type="ordered locus">NMA2037</name>
</gene>
<accession>Q9RQV9</accession>
<accession>A1ITM4</accession>
<feature type="chain" id="PRO_0000190119" description="Pyridoxine 5'-phosphate synthase">
    <location>
        <begin position="1"/>
        <end position="242"/>
    </location>
</feature>
<feature type="active site" description="Proton acceptor" evidence="1">
    <location>
        <position position="42"/>
    </location>
</feature>
<feature type="active site" description="Proton acceptor" evidence="1">
    <location>
        <position position="69"/>
    </location>
</feature>
<feature type="active site" description="Proton donor" evidence="1">
    <location>
        <position position="190"/>
    </location>
</feature>
<feature type="binding site" evidence="1">
    <location>
        <position position="6"/>
    </location>
    <ligand>
        <name>3-amino-2-oxopropyl phosphate</name>
        <dbReference type="ChEBI" id="CHEBI:57279"/>
    </ligand>
</feature>
<feature type="binding site" evidence="1">
    <location>
        <begin position="8"/>
        <end position="9"/>
    </location>
    <ligand>
        <name>1-deoxy-D-xylulose 5-phosphate</name>
        <dbReference type="ChEBI" id="CHEBI:57792"/>
    </ligand>
</feature>
<feature type="binding site" evidence="1">
    <location>
        <position position="17"/>
    </location>
    <ligand>
        <name>3-amino-2-oxopropyl phosphate</name>
        <dbReference type="ChEBI" id="CHEBI:57279"/>
    </ligand>
</feature>
<feature type="binding site" evidence="1">
    <location>
        <position position="44"/>
    </location>
    <ligand>
        <name>1-deoxy-D-xylulose 5-phosphate</name>
        <dbReference type="ChEBI" id="CHEBI:57792"/>
    </ligand>
</feature>
<feature type="binding site" evidence="1">
    <location>
        <position position="49"/>
    </location>
    <ligand>
        <name>1-deoxy-D-xylulose 5-phosphate</name>
        <dbReference type="ChEBI" id="CHEBI:57792"/>
    </ligand>
</feature>
<feature type="binding site" evidence="1">
    <location>
        <position position="99"/>
    </location>
    <ligand>
        <name>1-deoxy-D-xylulose 5-phosphate</name>
        <dbReference type="ChEBI" id="CHEBI:57792"/>
    </ligand>
</feature>
<feature type="binding site" evidence="1">
    <location>
        <position position="191"/>
    </location>
    <ligand>
        <name>3-amino-2-oxopropyl phosphate</name>
        <dbReference type="ChEBI" id="CHEBI:57279"/>
    </ligand>
</feature>
<feature type="binding site" evidence="1">
    <location>
        <begin position="212"/>
        <end position="213"/>
    </location>
    <ligand>
        <name>3-amino-2-oxopropyl phosphate</name>
        <dbReference type="ChEBI" id="CHEBI:57279"/>
    </ligand>
</feature>
<feature type="site" description="Transition state stabilizer" evidence="1">
    <location>
        <position position="150"/>
    </location>
</feature>
<reference key="1">
    <citation type="submission" date="1999-10" db="EMBL/GenBank/DDBJ databases">
        <title>Frequent horizontal genetic exchange between Neisseria meningitidis and commensal neisseriae.</title>
        <authorList>
            <person name="Linz B."/>
            <person name="Schenker M."/>
            <person name="Achtman M."/>
        </authorList>
    </citation>
    <scope>NUCLEOTIDE SEQUENCE [GENOMIC DNA]</scope>
    <source>
        <strain>DSM 15465 / Z2491</strain>
    </source>
</reference>
<reference key="2">
    <citation type="journal article" date="2000" name="Nature">
        <title>Complete DNA sequence of a serogroup A strain of Neisseria meningitidis Z2491.</title>
        <authorList>
            <person name="Parkhill J."/>
            <person name="Achtman M."/>
            <person name="James K.D."/>
            <person name="Bentley S.D."/>
            <person name="Churcher C.M."/>
            <person name="Klee S.R."/>
            <person name="Morelli G."/>
            <person name="Basham D."/>
            <person name="Brown D."/>
            <person name="Chillingworth T."/>
            <person name="Davies R.M."/>
            <person name="Davis P."/>
            <person name="Devlin K."/>
            <person name="Feltwell T."/>
            <person name="Hamlin N."/>
            <person name="Holroyd S."/>
            <person name="Jagels K."/>
            <person name="Leather S."/>
            <person name="Moule S."/>
            <person name="Mungall K.L."/>
            <person name="Quail M.A."/>
            <person name="Rajandream M.A."/>
            <person name="Rutherford K.M."/>
            <person name="Simmonds M."/>
            <person name="Skelton J."/>
            <person name="Whitehead S."/>
            <person name="Spratt B.G."/>
            <person name="Barrell B.G."/>
        </authorList>
    </citation>
    <scope>NUCLEOTIDE SEQUENCE [LARGE SCALE GENOMIC DNA]</scope>
    <source>
        <strain>DSM 15465 / Z2491</strain>
    </source>
</reference>